<proteinExistence type="inferred from homology"/>
<sequence>MQPKVLHTLEFDKVKEQLAEHASSPLGLEKIDALMPSSDLEEVAAWLDETDEAAAVLRLAGYVPLDGVVDIRPHLKRAAIGGTLSPQELLEVAATSAASRQMKRLIAGLYDEHGGLERLFRYADTLAEAPELEHDVRRSIDDHGEVLDAASDRLRSLRGQIRSVEARIREKLESIIRSPSAQKRLSDAIITIRNDRYVIPVKQEYRGAYGGIVHDQSASGATLFIEPQAVVELNNALREARAKEKQEIERILRELSAKVAEQAEPLARTVEALAALDFAFAKAKYARRLQAAKPAVNSRGYLRFLQARHPLLDQEKAVPNDIELGGDYTTIVITGPNTGGKTVTLKTIGLLTLMAQAGLFIPAADGSEAAVFRSVFADIGDEQSIEQSLSTFSSHMVNIVDILRHVDGESLVLFDELGAGTDPQEGAALAIAILDEVHGRGARTVATTHYPELKAYGYNRPGVVNASVEFDTETLRPTYKLLIGIPGRSNAFDISRRLGLDERIIERAKAQVSAESHNVENMIASLERSKKQAEEDEARARAALEEAERLRAEWEQKWEELEEEKAERLAEATQKAADIIRAAEREAERIIQELRRLQKEKQAEVKEHELVEAKQRLAAAMPKVEKRKKAKKAASRHVFQPGDEVKVTSLNQKGYLIEKVSDDEWQVQLGILKMKIHERDLEYIGSAPAKDVTPIATVKGKDAHVSLELDLRGERYEDALIRLEKYLDDAVLAGYARVSIIHGKGTGALRQGVQQFLKQHRAVKSFRFGEANEGGTGVTIVELK</sequence>
<reference key="1">
    <citation type="journal article" date="2004" name="Nucleic Acids Res.">
        <title>Thermoadaptation trait revealed by the genome sequence of thermophilic Geobacillus kaustophilus.</title>
        <authorList>
            <person name="Takami H."/>
            <person name="Takaki Y."/>
            <person name="Chee G.-J."/>
            <person name="Nishi S."/>
            <person name="Shimamura S."/>
            <person name="Suzuki H."/>
            <person name="Matsui S."/>
            <person name="Uchiyama I."/>
        </authorList>
    </citation>
    <scope>NUCLEOTIDE SEQUENCE [LARGE SCALE GENOMIC DNA]</scope>
    <source>
        <strain>HTA426</strain>
    </source>
</reference>
<name>MUTS2_GEOKA</name>
<protein>
    <recommendedName>
        <fullName evidence="1">Endonuclease MutS2</fullName>
        <ecNumber evidence="1">3.1.-.-</ecNumber>
    </recommendedName>
    <alternativeName>
        <fullName evidence="1">Ribosome-associated protein quality control-upstream factor</fullName>
        <shortName evidence="1">RQC-upstream factor</shortName>
        <shortName evidence="1">RqcU</shortName>
        <ecNumber evidence="1">3.6.4.-</ecNumber>
    </alternativeName>
</protein>
<gene>
    <name evidence="1" type="primary">mutS2</name>
    <name evidence="1" type="synonym">rqcU</name>
    <name type="ordered locus">GK2693</name>
</gene>
<feature type="chain" id="PRO_1000075476" description="Endonuclease MutS2">
    <location>
        <begin position="1"/>
        <end position="784"/>
    </location>
</feature>
<feature type="domain" description="Smr" evidence="1">
    <location>
        <begin position="709"/>
        <end position="784"/>
    </location>
</feature>
<feature type="binding site" evidence="1">
    <location>
        <begin position="335"/>
        <end position="342"/>
    </location>
    <ligand>
        <name>ATP</name>
        <dbReference type="ChEBI" id="CHEBI:30616"/>
    </ligand>
</feature>
<keyword id="KW-0067">ATP-binding</keyword>
<keyword id="KW-0238">DNA-binding</keyword>
<keyword id="KW-0255">Endonuclease</keyword>
<keyword id="KW-0378">Hydrolase</keyword>
<keyword id="KW-0540">Nuclease</keyword>
<keyword id="KW-0547">Nucleotide-binding</keyword>
<keyword id="KW-1185">Reference proteome</keyword>
<keyword id="KW-0694">RNA-binding</keyword>
<keyword id="KW-0699">rRNA-binding</keyword>
<dbReference type="EC" id="3.1.-.-" evidence="1"/>
<dbReference type="EC" id="3.6.4.-" evidence="1"/>
<dbReference type="EMBL" id="BA000043">
    <property type="protein sequence ID" value="BAD76978.1"/>
    <property type="molecule type" value="Genomic_DNA"/>
</dbReference>
<dbReference type="SMR" id="Q5KWF8"/>
<dbReference type="STRING" id="235909.GK2693"/>
<dbReference type="KEGG" id="gka:GK2693"/>
<dbReference type="eggNOG" id="COG1193">
    <property type="taxonomic scope" value="Bacteria"/>
</dbReference>
<dbReference type="HOGENOM" id="CLU_011252_2_1_9"/>
<dbReference type="Proteomes" id="UP000001172">
    <property type="component" value="Chromosome"/>
</dbReference>
<dbReference type="GO" id="GO:0005524">
    <property type="term" value="F:ATP binding"/>
    <property type="evidence" value="ECO:0007669"/>
    <property type="project" value="UniProtKB-UniRule"/>
</dbReference>
<dbReference type="GO" id="GO:0016887">
    <property type="term" value="F:ATP hydrolysis activity"/>
    <property type="evidence" value="ECO:0007669"/>
    <property type="project" value="InterPro"/>
</dbReference>
<dbReference type="GO" id="GO:0140664">
    <property type="term" value="F:ATP-dependent DNA damage sensor activity"/>
    <property type="evidence" value="ECO:0007669"/>
    <property type="project" value="InterPro"/>
</dbReference>
<dbReference type="GO" id="GO:0004519">
    <property type="term" value="F:endonuclease activity"/>
    <property type="evidence" value="ECO:0007669"/>
    <property type="project" value="UniProtKB-UniRule"/>
</dbReference>
<dbReference type="GO" id="GO:0030983">
    <property type="term" value="F:mismatched DNA binding"/>
    <property type="evidence" value="ECO:0007669"/>
    <property type="project" value="InterPro"/>
</dbReference>
<dbReference type="GO" id="GO:0043023">
    <property type="term" value="F:ribosomal large subunit binding"/>
    <property type="evidence" value="ECO:0007669"/>
    <property type="project" value="UniProtKB-UniRule"/>
</dbReference>
<dbReference type="GO" id="GO:0019843">
    <property type="term" value="F:rRNA binding"/>
    <property type="evidence" value="ECO:0007669"/>
    <property type="project" value="UniProtKB-UniRule"/>
</dbReference>
<dbReference type="GO" id="GO:0006298">
    <property type="term" value="P:mismatch repair"/>
    <property type="evidence" value="ECO:0007669"/>
    <property type="project" value="InterPro"/>
</dbReference>
<dbReference type="GO" id="GO:0045910">
    <property type="term" value="P:negative regulation of DNA recombination"/>
    <property type="evidence" value="ECO:0007669"/>
    <property type="project" value="InterPro"/>
</dbReference>
<dbReference type="GO" id="GO:0072344">
    <property type="term" value="P:rescue of stalled ribosome"/>
    <property type="evidence" value="ECO:0007669"/>
    <property type="project" value="UniProtKB-UniRule"/>
</dbReference>
<dbReference type="CDD" id="cd03280">
    <property type="entry name" value="ABC_MutS2"/>
    <property type="match status" value="1"/>
</dbReference>
<dbReference type="FunFam" id="3.30.1370.110:FF:000004">
    <property type="entry name" value="Endonuclease MutS2"/>
    <property type="match status" value="1"/>
</dbReference>
<dbReference type="FunFam" id="3.40.50.300:FF:000830">
    <property type="entry name" value="Endonuclease MutS2"/>
    <property type="match status" value="1"/>
</dbReference>
<dbReference type="Gene3D" id="3.30.1370.110">
    <property type="match status" value="1"/>
</dbReference>
<dbReference type="Gene3D" id="3.40.50.300">
    <property type="entry name" value="P-loop containing nucleotide triphosphate hydrolases"/>
    <property type="match status" value="1"/>
</dbReference>
<dbReference type="HAMAP" id="MF_00092">
    <property type="entry name" value="MutS2"/>
    <property type="match status" value="1"/>
</dbReference>
<dbReference type="InterPro" id="IPR000432">
    <property type="entry name" value="DNA_mismatch_repair_MutS_C"/>
</dbReference>
<dbReference type="InterPro" id="IPR007696">
    <property type="entry name" value="DNA_mismatch_repair_MutS_core"/>
</dbReference>
<dbReference type="InterPro" id="IPR036187">
    <property type="entry name" value="DNA_mismatch_repair_MutS_sf"/>
</dbReference>
<dbReference type="InterPro" id="IPR046893">
    <property type="entry name" value="MSSS"/>
</dbReference>
<dbReference type="InterPro" id="IPR045076">
    <property type="entry name" value="MutS"/>
</dbReference>
<dbReference type="InterPro" id="IPR005747">
    <property type="entry name" value="MutS2"/>
</dbReference>
<dbReference type="InterPro" id="IPR027417">
    <property type="entry name" value="P-loop_NTPase"/>
</dbReference>
<dbReference type="InterPro" id="IPR002625">
    <property type="entry name" value="Smr_dom"/>
</dbReference>
<dbReference type="InterPro" id="IPR036063">
    <property type="entry name" value="Smr_dom_sf"/>
</dbReference>
<dbReference type="NCBIfam" id="TIGR01069">
    <property type="entry name" value="mutS2"/>
    <property type="match status" value="1"/>
</dbReference>
<dbReference type="PANTHER" id="PTHR48466:SF2">
    <property type="entry name" value="OS10G0509000 PROTEIN"/>
    <property type="match status" value="1"/>
</dbReference>
<dbReference type="PANTHER" id="PTHR48466">
    <property type="entry name" value="OS10G0509000 PROTEIN-RELATED"/>
    <property type="match status" value="1"/>
</dbReference>
<dbReference type="Pfam" id="PF20297">
    <property type="entry name" value="MSSS"/>
    <property type="match status" value="1"/>
</dbReference>
<dbReference type="Pfam" id="PF00488">
    <property type="entry name" value="MutS_V"/>
    <property type="match status" value="1"/>
</dbReference>
<dbReference type="Pfam" id="PF01713">
    <property type="entry name" value="Smr"/>
    <property type="match status" value="1"/>
</dbReference>
<dbReference type="PIRSF" id="PIRSF005814">
    <property type="entry name" value="MutS_YshD"/>
    <property type="match status" value="1"/>
</dbReference>
<dbReference type="SMART" id="SM00534">
    <property type="entry name" value="MUTSac"/>
    <property type="match status" value="1"/>
</dbReference>
<dbReference type="SMART" id="SM00533">
    <property type="entry name" value="MUTSd"/>
    <property type="match status" value="1"/>
</dbReference>
<dbReference type="SMART" id="SM00463">
    <property type="entry name" value="SMR"/>
    <property type="match status" value="1"/>
</dbReference>
<dbReference type="SUPFAM" id="SSF48334">
    <property type="entry name" value="DNA repair protein MutS, domain III"/>
    <property type="match status" value="1"/>
</dbReference>
<dbReference type="SUPFAM" id="SSF52540">
    <property type="entry name" value="P-loop containing nucleoside triphosphate hydrolases"/>
    <property type="match status" value="1"/>
</dbReference>
<dbReference type="SUPFAM" id="SSF160443">
    <property type="entry name" value="SMR domain-like"/>
    <property type="match status" value="1"/>
</dbReference>
<dbReference type="PROSITE" id="PS00486">
    <property type="entry name" value="DNA_MISMATCH_REPAIR_2"/>
    <property type="match status" value="1"/>
</dbReference>
<dbReference type="PROSITE" id="PS50828">
    <property type="entry name" value="SMR"/>
    <property type="match status" value="1"/>
</dbReference>
<evidence type="ECO:0000255" key="1">
    <source>
        <dbReference type="HAMAP-Rule" id="MF_00092"/>
    </source>
</evidence>
<organism>
    <name type="scientific">Geobacillus kaustophilus (strain HTA426)</name>
    <dbReference type="NCBI Taxonomy" id="235909"/>
    <lineage>
        <taxon>Bacteria</taxon>
        <taxon>Bacillati</taxon>
        <taxon>Bacillota</taxon>
        <taxon>Bacilli</taxon>
        <taxon>Bacillales</taxon>
        <taxon>Anoxybacillaceae</taxon>
        <taxon>Geobacillus</taxon>
        <taxon>Geobacillus thermoleovorans group</taxon>
    </lineage>
</organism>
<accession>Q5KWF8</accession>
<comment type="function">
    <text evidence="1">Endonuclease that is involved in the suppression of homologous recombination and thus may have a key role in the control of bacterial genetic diversity.</text>
</comment>
<comment type="function">
    <text evidence="1">Acts as a ribosome collision sensor, splitting the ribosome into its 2 subunits. Detects stalled/collided 70S ribosomes which it binds and splits by an ATP-hydrolysis driven conformational change. Acts upstream of the ribosome quality control system (RQC), a ribosome-associated complex that mediates the extraction of incompletely synthesized nascent chains from stalled ribosomes and their subsequent degradation. Probably generates substrates for RQC.</text>
</comment>
<comment type="subunit">
    <text evidence="1">Homodimer. Binds to stalled ribosomes, contacting rRNA.</text>
</comment>
<comment type="similarity">
    <text evidence="1">Belongs to the DNA mismatch repair MutS family. MutS2 subfamily.</text>
</comment>